<proteinExistence type="inferred from homology"/>
<sequence>MKLSLSPPPYADAPVVVLISGLGGSGSYWLPQLAVLEQEYQVVCYDQRGTGNNPDTLAEDYSIAQMAAELHQVLVAAGIEHYAVVGHALGALVGMQLALDYPASVTVLVSVNGWLRINAHTRRCFQVRERLLYSGGAQAWVEAQPLFLYPADWMAARAPRLEAEDALALAHFQGKNNLLRRLNALKRADFSHHADRIRCPVQIICASDDLLVPSACSSELHAALPDSQKMVMRYGGHACNVTDPETFNALLLNGLASLLHHREAAL</sequence>
<accession>A7ZYW4</accession>
<evidence type="ECO:0000255" key="1">
    <source>
        <dbReference type="HAMAP-Rule" id="MF_00832"/>
    </source>
</evidence>
<reference key="1">
    <citation type="journal article" date="2008" name="J. Bacteriol.">
        <title>The pangenome structure of Escherichia coli: comparative genomic analysis of E. coli commensal and pathogenic isolates.</title>
        <authorList>
            <person name="Rasko D.A."/>
            <person name="Rosovitz M.J."/>
            <person name="Myers G.S.A."/>
            <person name="Mongodin E.F."/>
            <person name="Fricke W.F."/>
            <person name="Gajer P."/>
            <person name="Crabtree J."/>
            <person name="Sebaihia M."/>
            <person name="Thomson N.R."/>
            <person name="Chaudhuri R."/>
            <person name="Henderson I.R."/>
            <person name="Sperandio V."/>
            <person name="Ravel J."/>
        </authorList>
    </citation>
    <scope>NUCLEOTIDE SEQUENCE [LARGE SCALE GENOMIC DNA]</scope>
    <source>
        <strain>HS</strain>
    </source>
</reference>
<comment type="function">
    <text evidence="1">Involved in pyrimidine catabolism. May facilitate the hydrolysis of carbamate, a reaction that can also occur spontaneously.</text>
</comment>
<comment type="catalytic activity">
    <reaction evidence="1">
        <text>carbamate + 2 H(+) = NH4(+) + CO2</text>
        <dbReference type="Rhea" id="RHEA:15649"/>
        <dbReference type="ChEBI" id="CHEBI:13941"/>
        <dbReference type="ChEBI" id="CHEBI:15378"/>
        <dbReference type="ChEBI" id="CHEBI:16526"/>
        <dbReference type="ChEBI" id="CHEBI:28938"/>
    </reaction>
</comment>
<comment type="similarity">
    <text evidence="1">Belongs to the AB hydrolase superfamily. Hydrolase RutD family.</text>
</comment>
<name>RUTD_ECOHS</name>
<gene>
    <name evidence="1" type="primary">rutD</name>
    <name type="ordered locus">EcHS_A1124</name>
</gene>
<protein>
    <recommendedName>
        <fullName evidence="1">Putative carbamate hydrolase RutD</fullName>
        <ecNumber evidence="1">3.5.1.-</ecNumber>
    </recommendedName>
    <alternativeName>
        <fullName evidence="1">Aminohydrolase</fullName>
    </alternativeName>
</protein>
<organism>
    <name type="scientific">Escherichia coli O9:H4 (strain HS)</name>
    <dbReference type="NCBI Taxonomy" id="331112"/>
    <lineage>
        <taxon>Bacteria</taxon>
        <taxon>Pseudomonadati</taxon>
        <taxon>Pseudomonadota</taxon>
        <taxon>Gammaproteobacteria</taxon>
        <taxon>Enterobacterales</taxon>
        <taxon>Enterobacteriaceae</taxon>
        <taxon>Escherichia</taxon>
    </lineage>
</organism>
<dbReference type="EC" id="3.5.1.-" evidence="1"/>
<dbReference type="EMBL" id="CP000802">
    <property type="protein sequence ID" value="ABV05468.1"/>
    <property type="molecule type" value="Genomic_DNA"/>
</dbReference>
<dbReference type="RefSeq" id="WP_001619304.1">
    <property type="nucleotide sequence ID" value="NC_009800.1"/>
</dbReference>
<dbReference type="SMR" id="A7ZYW4"/>
<dbReference type="ESTHER" id="ecoli-rutD">
    <property type="family name" value="RutD"/>
</dbReference>
<dbReference type="KEGG" id="ecx:EcHS_A1124"/>
<dbReference type="HOGENOM" id="CLU_020336_50_1_6"/>
<dbReference type="GO" id="GO:0016020">
    <property type="term" value="C:membrane"/>
    <property type="evidence" value="ECO:0007669"/>
    <property type="project" value="TreeGrafter"/>
</dbReference>
<dbReference type="GO" id="GO:0016811">
    <property type="term" value="F:hydrolase activity, acting on carbon-nitrogen (but not peptide) bonds, in linear amides"/>
    <property type="evidence" value="ECO:0007669"/>
    <property type="project" value="InterPro"/>
</dbReference>
<dbReference type="GO" id="GO:0019740">
    <property type="term" value="P:nitrogen utilization"/>
    <property type="evidence" value="ECO:0007669"/>
    <property type="project" value="UniProtKB-UniRule"/>
</dbReference>
<dbReference type="GO" id="GO:0006212">
    <property type="term" value="P:uracil catabolic process"/>
    <property type="evidence" value="ECO:0007669"/>
    <property type="project" value="UniProtKB-UniRule"/>
</dbReference>
<dbReference type="FunFam" id="3.40.50.1820:FF:000052">
    <property type="entry name" value="Putative aminoacrylate hydrolase RutD"/>
    <property type="match status" value="1"/>
</dbReference>
<dbReference type="Gene3D" id="3.40.50.1820">
    <property type="entry name" value="alpha/beta hydrolase"/>
    <property type="match status" value="1"/>
</dbReference>
<dbReference type="HAMAP" id="MF_00832">
    <property type="entry name" value="RutD"/>
    <property type="match status" value="1"/>
</dbReference>
<dbReference type="InterPro" id="IPR000073">
    <property type="entry name" value="AB_hydrolase_1"/>
</dbReference>
<dbReference type="InterPro" id="IPR029058">
    <property type="entry name" value="AB_hydrolase_fold"/>
</dbReference>
<dbReference type="InterPro" id="IPR050266">
    <property type="entry name" value="AB_hydrolase_sf"/>
</dbReference>
<dbReference type="InterPro" id="IPR019913">
    <property type="entry name" value="Pyrimidine_utilisation_RutD"/>
</dbReference>
<dbReference type="NCBIfam" id="TIGR03611">
    <property type="entry name" value="RutD"/>
    <property type="match status" value="1"/>
</dbReference>
<dbReference type="PANTHER" id="PTHR43798:SF27">
    <property type="entry name" value="HYDROLASE ALPHA_BETA HYDROLASE FOLD FAMILY"/>
    <property type="match status" value="1"/>
</dbReference>
<dbReference type="PANTHER" id="PTHR43798">
    <property type="entry name" value="MONOACYLGLYCEROL LIPASE"/>
    <property type="match status" value="1"/>
</dbReference>
<dbReference type="Pfam" id="PF00561">
    <property type="entry name" value="Abhydrolase_1"/>
    <property type="match status" value="1"/>
</dbReference>
<dbReference type="SUPFAM" id="SSF53474">
    <property type="entry name" value="alpha/beta-Hydrolases"/>
    <property type="match status" value="1"/>
</dbReference>
<keyword id="KW-0378">Hydrolase</keyword>
<feature type="chain" id="PRO_0000402966" description="Putative carbamate hydrolase RutD">
    <location>
        <begin position="1"/>
        <end position="266"/>
    </location>
</feature>
<feature type="domain" description="AB hydrolase-1" evidence="1">
    <location>
        <begin position="14"/>
        <end position="115"/>
    </location>
</feature>